<name>Y2972_CHRSD</name>
<dbReference type="EMBL" id="CP000285">
    <property type="protein sequence ID" value="ABE60317.1"/>
    <property type="molecule type" value="Genomic_DNA"/>
</dbReference>
<dbReference type="RefSeq" id="WP_011508263.1">
    <property type="nucleotide sequence ID" value="NC_007963.1"/>
</dbReference>
<dbReference type="SMR" id="Q1QT91"/>
<dbReference type="STRING" id="290398.Csal_2972"/>
<dbReference type="GeneID" id="95335661"/>
<dbReference type="KEGG" id="csa:Csal_2972"/>
<dbReference type="eggNOG" id="COG2003">
    <property type="taxonomic scope" value="Bacteria"/>
</dbReference>
<dbReference type="HOGENOM" id="CLU_073529_0_1_6"/>
<dbReference type="OrthoDB" id="9804482at2"/>
<dbReference type="Proteomes" id="UP000000239">
    <property type="component" value="Chromosome"/>
</dbReference>
<dbReference type="GO" id="GO:0046872">
    <property type="term" value="F:metal ion binding"/>
    <property type="evidence" value="ECO:0007669"/>
    <property type="project" value="UniProtKB-KW"/>
</dbReference>
<dbReference type="GO" id="GO:0008237">
    <property type="term" value="F:metallopeptidase activity"/>
    <property type="evidence" value="ECO:0007669"/>
    <property type="project" value="UniProtKB-KW"/>
</dbReference>
<dbReference type="GO" id="GO:0006508">
    <property type="term" value="P:proteolysis"/>
    <property type="evidence" value="ECO:0007669"/>
    <property type="project" value="UniProtKB-KW"/>
</dbReference>
<dbReference type="CDD" id="cd08071">
    <property type="entry name" value="MPN_DUF2466"/>
    <property type="match status" value="1"/>
</dbReference>
<dbReference type="Gene3D" id="3.40.140.10">
    <property type="entry name" value="Cytidine Deaminase, domain 2"/>
    <property type="match status" value="1"/>
</dbReference>
<dbReference type="InterPro" id="IPR037518">
    <property type="entry name" value="MPN"/>
</dbReference>
<dbReference type="InterPro" id="IPR025657">
    <property type="entry name" value="RadC_JAB"/>
</dbReference>
<dbReference type="InterPro" id="IPR010994">
    <property type="entry name" value="RuvA_2-like"/>
</dbReference>
<dbReference type="InterPro" id="IPR001405">
    <property type="entry name" value="UPF0758"/>
</dbReference>
<dbReference type="InterPro" id="IPR020891">
    <property type="entry name" value="UPF0758_CS"/>
</dbReference>
<dbReference type="InterPro" id="IPR046778">
    <property type="entry name" value="UPF0758_N"/>
</dbReference>
<dbReference type="NCBIfam" id="NF000642">
    <property type="entry name" value="PRK00024.1"/>
    <property type="match status" value="1"/>
</dbReference>
<dbReference type="NCBIfam" id="TIGR00608">
    <property type="entry name" value="radc"/>
    <property type="match status" value="1"/>
</dbReference>
<dbReference type="PANTHER" id="PTHR30471">
    <property type="entry name" value="DNA REPAIR PROTEIN RADC"/>
    <property type="match status" value="1"/>
</dbReference>
<dbReference type="PANTHER" id="PTHR30471:SF3">
    <property type="entry name" value="UPF0758 PROTEIN YEES-RELATED"/>
    <property type="match status" value="1"/>
</dbReference>
<dbReference type="Pfam" id="PF04002">
    <property type="entry name" value="RadC"/>
    <property type="match status" value="1"/>
</dbReference>
<dbReference type="Pfam" id="PF20582">
    <property type="entry name" value="UPF0758_N"/>
    <property type="match status" value="1"/>
</dbReference>
<dbReference type="SUPFAM" id="SSF102712">
    <property type="entry name" value="JAB1/MPN domain"/>
    <property type="match status" value="1"/>
</dbReference>
<dbReference type="SUPFAM" id="SSF47781">
    <property type="entry name" value="RuvA domain 2-like"/>
    <property type="match status" value="1"/>
</dbReference>
<dbReference type="PROSITE" id="PS50249">
    <property type="entry name" value="MPN"/>
    <property type="match status" value="1"/>
</dbReference>
<dbReference type="PROSITE" id="PS01302">
    <property type="entry name" value="UPF0758"/>
    <property type="match status" value="1"/>
</dbReference>
<sequence length="224" mass="24614">MAIHEWPEGERPREKLLALGASALSDAELLAIFLRVGVKGRSAVDLARDLLLAFGGLRPLLEADLARFCAEHGLGEAKYVQLQASLELSRRHLGSLLERGAALTSPTLVRRFLTSQLRHLPHEAFAALFLDTQHRVIRFETLSKGTLDSASVYPREVSRRALALNAGALIFAHNHPSGVAEPSDADRRITQRLSDALGLFDIRVLDHFVVGDGEVVSFAERGWL</sequence>
<reference key="1">
    <citation type="journal article" date="2011" name="Stand. Genomic Sci.">
        <title>Complete genome sequence of the halophilic and highly halotolerant Chromohalobacter salexigens type strain (1H11(T)).</title>
        <authorList>
            <person name="Copeland A."/>
            <person name="O'Connor K."/>
            <person name="Lucas S."/>
            <person name="Lapidus A."/>
            <person name="Berry K.W."/>
            <person name="Detter J.C."/>
            <person name="Del Rio T.G."/>
            <person name="Hammon N."/>
            <person name="Dalin E."/>
            <person name="Tice H."/>
            <person name="Pitluck S."/>
            <person name="Bruce D."/>
            <person name="Goodwin L."/>
            <person name="Han C."/>
            <person name="Tapia R."/>
            <person name="Saunders E."/>
            <person name="Schmutz J."/>
            <person name="Brettin T."/>
            <person name="Larimer F."/>
            <person name="Land M."/>
            <person name="Hauser L."/>
            <person name="Vargas C."/>
            <person name="Nieto J.J."/>
            <person name="Kyrpides N.C."/>
            <person name="Ivanova N."/>
            <person name="Goker M."/>
            <person name="Klenk H.P."/>
            <person name="Csonka L.N."/>
            <person name="Woyke T."/>
        </authorList>
    </citation>
    <scope>NUCLEOTIDE SEQUENCE [LARGE SCALE GENOMIC DNA]</scope>
    <source>
        <strain>ATCC BAA-138 / DSM 3043 / CIP 106854 / NCIMB 13768 / 1H11</strain>
    </source>
</reference>
<feature type="chain" id="PRO_1000001647" description="UPF0758 protein Csal_2972">
    <location>
        <begin position="1"/>
        <end position="224"/>
    </location>
</feature>
<feature type="domain" description="MPN" evidence="1">
    <location>
        <begin position="102"/>
        <end position="224"/>
    </location>
</feature>
<feature type="short sequence motif" description="JAMM motif" evidence="1">
    <location>
        <begin position="173"/>
        <end position="186"/>
    </location>
</feature>
<feature type="binding site" evidence="1">
    <location>
        <position position="173"/>
    </location>
    <ligand>
        <name>Zn(2+)</name>
        <dbReference type="ChEBI" id="CHEBI:29105"/>
        <note>catalytic</note>
    </ligand>
</feature>
<feature type="binding site" evidence="1">
    <location>
        <position position="175"/>
    </location>
    <ligand>
        <name>Zn(2+)</name>
        <dbReference type="ChEBI" id="CHEBI:29105"/>
        <note>catalytic</note>
    </ligand>
</feature>
<feature type="binding site" evidence="1">
    <location>
        <position position="186"/>
    </location>
    <ligand>
        <name>Zn(2+)</name>
        <dbReference type="ChEBI" id="CHEBI:29105"/>
        <note>catalytic</note>
    </ligand>
</feature>
<gene>
    <name type="ordered locus">Csal_2972</name>
</gene>
<accession>Q1QT91</accession>
<keyword id="KW-0378">Hydrolase</keyword>
<keyword id="KW-0479">Metal-binding</keyword>
<keyword id="KW-0482">Metalloprotease</keyword>
<keyword id="KW-0645">Protease</keyword>
<keyword id="KW-1185">Reference proteome</keyword>
<keyword id="KW-0862">Zinc</keyword>
<protein>
    <recommendedName>
        <fullName>UPF0758 protein Csal_2972</fullName>
    </recommendedName>
</protein>
<proteinExistence type="inferred from homology"/>
<organism>
    <name type="scientific">Chromohalobacter salexigens (strain ATCC BAA-138 / DSM 3043 / CIP 106854 / NCIMB 13768 / 1H11)</name>
    <dbReference type="NCBI Taxonomy" id="290398"/>
    <lineage>
        <taxon>Bacteria</taxon>
        <taxon>Pseudomonadati</taxon>
        <taxon>Pseudomonadota</taxon>
        <taxon>Gammaproteobacteria</taxon>
        <taxon>Oceanospirillales</taxon>
        <taxon>Halomonadaceae</taxon>
        <taxon>Chromohalobacter</taxon>
    </lineage>
</organism>
<evidence type="ECO:0000255" key="1">
    <source>
        <dbReference type="PROSITE-ProRule" id="PRU01182"/>
    </source>
</evidence>
<evidence type="ECO:0000305" key="2"/>
<comment type="similarity">
    <text evidence="2">Belongs to the UPF0758 family.</text>
</comment>